<reference key="1">
    <citation type="journal article" date="1999" name="Biochem. J.">
        <title>Cloning and expression of murine liver phosphatidylserine synthase (PSS)-2: differential regulation of phospholipid metabolism by PSS1 and PSS2.</title>
        <authorList>
            <person name="Stone S.J."/>
            <person name="Vance J.E."/>
        </authorList>
    </citation>
    <scope>NUCLEOTIDE SEQUENCE [MRNA] (ISOFORM 1)</scope>
    <scope>FUNCTION</scope>
    <scope>CATALYTIC ACTIVITY</scope>
    <scope>TISSUE SPECIFICITY</scope>
    <source>
        <strain>BALB/cJ</strain>
        <tissue>Liver</tissue>
    </source>
</reference>
<reference key="2">
    <citation type="journal article" date="2005" name="Science">
        <title>The transcriptional landscape of the mammalian genome.</title>
        <authorList>
            <person name="Carninci P."/>
            <person name="Kasukawa T."/>
            <person name="Katayama S."/>
            <person name="Gough J."/>
            <person name="Frith M.C."/>
            <person name="Maeda N."/>
            <person name="Oyama R."/>
            <person name="Ravasi T."/>
            <person name="Lenhard B."/>
            <person name="Wells C."/>
            <person name="Kodzius R."/>
            <person name="Shimokawa K."/>
            <person name="Bajic V.B."/>
            <person name="Brenner S.E."/>
            <person name="Batalov S."/>
            <person name="Forrest A.R."/>
            <person name="Zavolan M."/>
            <person name="Davis M.J."/>
            <person name="Wilming L.G."/>
            <person name="Aidinis V."/>
            <person name="Allen J.E."/>
            <person name="Ambesi-Impiombato A."/>
            <person name="Apweiler R."/>
            <person name="Aturaliya R.N."/>
            <person name="Bailey T.L."/>
            <person name="Bansal M."/>
            <person name="Baxter L."/>
            <person name="Beisel K.W."/>
            <person name="Bersano T."/>
            <person name="Bono H."/>
            <person name="Chalk A.M."/>
            <person name="Chiu K.P."/>
            <person name="Choudhary V."/>
            <person name="Christoffels A."/>
            <person name="Clutterbuck D.R."/>
            <person name="Crowe M.L."/>
            <person name="Dalla E."/>
            <person name="Dalrymple B.P."/>
            <person name="de Bono B."/>
            <person name="Della Gatta G."/>
            <person name="di Bernardo D."/>
            <person name="Down T."/>
            <person name="Engstrom P."/>
            <person name="Fagiolini M."/>
            <person name="Faulkner G."/>
            <person name="Fletcher C.F."/>
            <person name="Fukushima T."/>
            <person name="Furuno M."/>
            <person name="Futaki S."/>
            <person name="Gariboldi M."/>
            <person name="Georgii-Hemming P."/>
            <person name="Gingeras T.R."/>
            <person name="Gojobori T."/>
            <person name="Green R.E."/>
            <person name="Gustincich S."/>
            <person name="Harbers M."/>
            <person name="Hayashi Y."/>
            <person name="Hensch T.K."/>
            <person name="Hirokawa N."/>
            <person name="Hill D."/>
            <person name="Huminiecki L."/>
            <person name="Iacono M."/>
            <person name="Ikeo K."/>
            <person name="Iwama A."/>
            <person name="Ishikawa T."/>
            <person name="Jakt M."/>
            <person name="Kanapin A."/>
            <person name="Katoh M."/>
            <person name="Kawasawa Y."/>
            <person name="Kelso J."/>
            <person name="Kitamura H."/>
            <person name="Kitano H."/>
            <person name="Kollias G."/>
            <person name="Krishnan S.P."/>
            <person name="Kruger A."/>
            <person name="Kummerfeld S.K."/>
            <person name="Kurochkin I.V."/>
            <person name="Lareau L.F."/>
            <person name="Lazarevic D."/>
            <person name="Lipovich L."/>
            <person name="Liu J."/>
            <person name="Liuni S."/>
            <person name="McWilliam S."/>
            <person name="Madan Babu M."/>
            <person name="Madera M."/>
            <person name="Marchionni L."/>
            <person name="Matsuda H."/>
            <person name="Matsuzawa S."/>
            <person name="Miki H."/>
            <person name="Mignone F."/>
            <person name="Miyake S."/>
            <person name="Morris K."/>
            <person name="Mottagui-Tabar S."/>
            <person name="Mulder N."/>
            <person name="Nakano N."/>
            <person name="Nakauchi H."/>
            <person name="Ng P."/>
            <person name="Nilsson R."/>
            <person name="Nishiguchi S."/>
            <person name="Nishikawa S."/>
            <person name="Nori F."/>
            <person name="Ohara O."/>
            <person name="Okazaki Y."/>
            <person name="Orlando V."/>
            <person name="Pang K.C."/>
            <person name="Pavan W.J."/>
            <person name="Pavesi G."/>
            <person name="Pesole G."/>
            <person name="Petrovsky N."/>
            <person name="Piazza S."/>
            <person name="Reed J."/>
            <person name="Reid J.F."/>
            <person name="Ring B.Z."/>
            <person name="Ringwald M."/>
            <person name="Rost B."/>
            <person name="Ruan Y."/>
            <person name="Salzberg S.L."/>
            <person name="Sandelin A."/>
            <person name="Schneider C."/>
            <person name="Schoenbach C."/>
            <person name="Sekiguchi K."/>
            <person name="Semple C.A."/>
            <person name="Seno S."/>
            <person name="Sessa L."/>
            <person name="Sheng Y."/>
            <person name="Shibata Y."/>
            <person name="Shimada H."/>
            <person name="Shimada K."/>
            <person name="Silva D."/>
            <person name="Sinclair B."/>
            <person name="Sperling S."/>
            <person name="Stupka E."/>
            <person name="Sugiura K."/>
            <person name="Sultana R."/>
            <person name="Takenaka Y."/>
            <person name="Taki K."/>
            <person name="Tammoja K."/>
            <person name="Tan S.L."/>
            <person name="Tang S."/>
            <person name="Taylor M.S."/>
            <person name="Tegner J."/>
            <person name="Teichmann S.A."/>
            <person name="Ueda H.R."/>
            <person name="van Nimwegen E."/>
            <person name="Verardo R."/>
            <person name="Wei C.L."/>
            <person name="Yagi K."/>
            <person name="Yamanishi H."/>
            <person name="Zabarovsky E."/>
            <person name="Zhu S."/>
            <person name="Zimmer A."/>
            <person name="Hide W."/>
            <person name="Bult C."/>
            <person name="Grimmond S.M."/>
            <person name="Teasdale R.D."/>
            <person name="Liu E.T."/>
            <person name="Brusic V."/>
            <person name="Quackenbush J."/>
            <person name="Wahlestedt C."/>
            <person name="Mattick J.S."/>
            <person name="Hume D.A."/>
            <person name="Kai C."/>
            <person name="Sasaki D."/>
            <person name="Tomaru Y."/>
            <person name="Fukuda S."/>
            <person name="Kanamori-Katayama M."/>
            <person name="Suzuki M."/>
            <person name="Aoki J."/>
            <person name="Arakawa T."/>
            <person name="Iida J."/>
            <person name="Imamura K."/>
            <person name="Itoh M."/>
            <person name="Kato T."/>
            <person name="Kawaji H."/>
            <person name="Kawagashira N."/>
            <person name="Kawashima T."/>
            <person name="Kojima M."/>
            <person name="Kondo S."/>
            <person name="Konno H."/>
            <person name="Nakano K."/>
            <person name="Ninomiya N."/>
            <person name="Nishio T."/>
            <person name="Okada M."/>
            <person name="Plessy C."/>
            <person name="Shibata K."/>
            <person name="Shiraki T."/>
            <person name="Suzuki S."/>
            <person name="Tagami M."/>
            <person name="Waki K."/>
            <person name="Watahiki A."/>
            <person name="Okamura-Oho Y."/>
            <person name="Suzuki H."/>
            <person name="Kawai J."/>
            <person name="Hayashizaki Y."/>
        </authorList>
    </citation>
    <scope>NUCLEOTIDE SEQUENCE [LARGE SCALE MRNA] (ISOFORMS 1 AND 2)</scope>
    <source>
        <strain>C57BL/6J</strain>
        <tissue>Cerebellum</tissue>
        <tissue>Corpus striatum</tissue>
        <tissue>Embryo</tissue>
        <tissue>Medulla oblongata</tissue>
    </source>
</reference>
<reference key="3">
    <citation type="journal article" date="2004" name="Genome Res.">
        <title>The status, quality, and expansion of the NIH full-length cDNA project: the Mammalian Gene Collection (MGC).</title>
        <authorList>
            <consortium name="The MGC Project Team"/>
        </authorList>
    </citation>
    <scope>NUCLEOTIDE SEQUENCE [LARGE SCALE MRNA] (ISOFORM 1)</scope>
    <source>
        <tissue>Mammary tumor</tissue>
        <tissue>Olfactory epithelium</tissue>
    </source>
</reference>
<reference key="4">
    <citation type="journal article" date="2000" name="J. Biol. Chem.">
        <title>Phosphatidylserine synthase-1 and -2 are localized to mitochondria-associated membranes.</title>
        <authorList>
            <person name="Stone S.J."/>
            <person name="Vance J.E."/>
        </authorList>
    </citation>
    <scope>FUNCTION</scope>
    <scope>CATALYTIC ACTIVITY</scope>
    <scope>ACTIVITY REGULATION</scope>
    <scope>SUBSTRATE SPECIFICITY</scope>
    <scope>SUBCELLULAR LOCATION</scope>
</reference>
<reference key="5">
    <citation type="journal article" date="2002" name="J. Biol. Chem.">
        <title>Defining the importance of phosphatidylserine synthase 2 in mice.</title>
        <authorList>
            <person name="Bergo M.O."/>
            <person name="Gavino B.J."/>
            <person name="Steenbergen R."/>
            <person name="Sturbois B."/>
            <person name="Parlow A.F."/>
            <person name="Sanan D.A."/>
            <person name="Skarnes W.C."/>
            <person name="Vance J.E."/>
            <person name="Young S.G."/>
        </authorList>
    </citation>
    <scope>FUNCTION</scope>
    <scope>CATALYTIC ACTIVITY</scope>
    <scope>DISRUPTION PHENOTYPE</scope>
    <scope>TISSUE SPECIFICITY</scope>
</reference>
<reference key="6">
    <citation type="journal article" date="2008" name="J. Biol. Chem.">
        <title>Defining the importance of phosphatidylserine synthase-1 (PSS1): unexpected viability of PSS1-deficient mice.</title>
        <authorList>
            <person name="Arikketh D."/>
            <person name="Nelson R."/>
            <person name="Vance J.E."/>
        </authorList>
    </citation>
    <scope>DISRUPTION PHENOTYPE</scope>
</reference>
<reference key="7">
    <citation type="journal article" date="2010" name="Cell">
        <title>A tissue-specific atlas of mouse protein phosphorylation and expression.</title>
        <authorList>
            <person name="Huttlin E.L."/>
            <person name="Jedrychowski M.P."/>
            <person name="Elias J.E."/>
            <person name="Goswami T."/>
            <person name="Rad R."/>
            <person name="Beausoleil S.A."/>
            <person name="Villen J."/>
            <person name="Haas W."/>
            <person name="Sowa M.E."/>
            <person name="Gygi S.P."/>
        </authorList>
    </citation>
    <scope>PHOSPHORYLATION [LARGE SCALE ANALYSIS] AT SER-14 AND SER-16</scope>
    <scope>IDENTIFICATION BY MASS SPECTROMETRY [LARGE SCALE ANALYSIS]</scope>
    <source>
        <tissue>Brain</tissue>
        <tissue>Kidney</tissue>
        <tissue>Pancreas</tissue>
        <tissue>Testis</tissue>
    </source>
</reference>
<reference key="8">
    <citation type="journal article" date="2013" name="J. Lipid Res.">
        <title>Phosphatidylserine synthase 2: high efficiency for synthesizing phosphatidylserine containing docosahexaenoic acid.</title>
        <authorList>
            <person name="Kimura A.K."/>
            <person name="Kim H.Y."/>
        </authorList>
    </citation>
    <scope>FUNCTION</scope>
    <scope>CATALYTIC ACTIVITY</scope>
    <scope>SUBSTRATE SPECIFICITY</scope>
    <scope>SUBCELLULAR LOCATION</scope>
    <scope>IDENTIFICATION BY MASS SPECTROMETRY</scope>
</reference>
<feature type="chain" id="PRO_0000056833" description="Phosphatidylserine synthase 2">
    <location>
        <begin position="1"/>
        <end position="473"/>
    </location>
</feature>
<feature type="topological domain" description="Cytoplasmic" evidence="3">
    <location>
        <begin position="1"/>
        <end position="40"/>
    </location>
</feature>
<feature type="transmembrane region" description="Helical" evidence="3">
    <location>
        <begin position="41"/>
        <end position="61"/>
    </location>
</feature>
<feature type="topological domain" description="Lumenal" evidence="3">
    <location>
        <begin position="62"/>
        <end position="74"/>
    </location>
</feature>
<feature type="transmembrane region" description="Helical" evidence="3">
    <location>
        <begin position="75"/>
        <end position="95"/>
    </location>
</feature>
<feature type="topological domain" description="Cytoplasmic" evidence="3">
    <location>
        <begin position="96"/>
        <end position="104"/>
    </location>
</feature>
<feature type="transmembrane region" description="Helical" evidence="3">
    <location>
        <begin position="105"/>
        <end position="125"/>
    </location>
</feature>
<feature type="topological domain" description="Lumenal" evidence="3">
    <location>
        <begin position="126"/>
        <end position="291"/>
    </location>
</feature>
<feature type="transmembrane region" description="Helical" evidence="3">
    <location>
        <begin position="292"/>
        <end position="312"/>
    </location>
</feature>
<feature type="topological domain" description="Cytoplasmic" evidence="3">
    <location>
        <position position="313"/>
    </location>
</feature>
<feature type="transmembrane region" description="Helical" evidence="3">
    <location>
        <begin position="314"/>
        <end position="334"/>
    </location>
</feature>
<feature type="topological domain" description="Lumenal" evidence="3">
    <location>
        <begin position="335"/>
        <end position="354"/>
    </location>
</feature>
<feature type="transmembrane region" description="Helical" evidence="3">
    <location>
        <begin position="355"/>
        <end position="375"/>
    </location>
</feature>
<feature type="topological domain" description="Cytoplasmic" evidence="3">
    <location>
        <begin position="376"/>
        <end position="381"/>
    </location>
</feature>
<feature type="transmembrane region" description="Helical" evidence="3">
    <location>
        <begin position="382"/>
        <end position="402"/>
    </location>
</feature>
<feature type="topological domain" description="Lumenal" evidence="3">
    <location>
        <begin position="403"/>
        <end position="473"/>
    </location>
</feature>
<feature type="region of interest" description="Disordered" evidence="4">
    <location>
        <begin position="1"/>
        <end position="25"/>
    </location>
</feature>
<feature type="region of interest" description="Disordered" evidence="4">
    <location>
        <begin position="422"/>
        <end position="473"/>
    </location>
</feature>
<feature type="modified residue" description="Phosphoserine" evidence="2">
    <location>
        <position position="12"/>
    </location>
</feature>
<feature type="modified residue" description="Phosphoserine" evidence="13">
    <location>
        <position position="14"/>
    </location>
</feature>
<feature type="modified residue" description="Phosphoserine" evidence="13">
    <location>
        <position position="16"/>
    </location>
</feature>
<feature type="glycosylation site" description="N-linked (GlcNAc...) asparagine" evidence="1">
    <location>
        <position position="159"/>
    </location>
</feature>
<feature type="splice variant" id="VSP_010637" description="In isoform 2." evidence="10">
    <original>GKMKRIAFQFTPYSWVRFEWKPASSLHRWLAVCGIILVFL</original>
    <variation>YILGVIEGNHRALGPQGQGLATWEGGKQNIRVVESDC</variation>
    <location>
        <begin position="264"/>
        <end position="303"/>
    </location>
</feature>
<feature type="splice variant" id="VSP_010638" description="In isoform 2." evidence="10">
    <location>
        <begin position="304"/>
        <end position="473"/>
    </location>
</feature>
<feature type="sequence conflict" description="In Ref. 1; AAC98383." evidence="11" ref="1">
    <original>G</original>
    <variation>A</variation>
    <location>
        <position position="4"/>
    </location>
</feature>
<feature type="sequence conflict" description="In Ref. 2; BAC27599." evidence="11" ref="2">
    <original>G</original>
    <variation>A</variation>
    <location>
        <position position="11"/>
    </location>
</feature>
<feature type="sequence conflict" description="In Ref. 1; AAC98383." evidence="11" ref="1">
    <original>T</original>
    <variation>A</variation>
    <location>
        <position position="469"/>
    </location>
</feature>
<keyword id="KW-0025">Alternative splicing</keyword>
<keyword id="KW-0256">Endoplasmic reticulum</keyword>
<keyword id="KW-0325">Glycoprotein</keyword>
<keyword id="KW-0444">Lipid biosynthesis</keyword>
<keyword id="KW-0443">Lipid metabolism</keyword>
<keyword id="KW-0472">Membrane</keyword>
<keyword id="KW-0594">Phospholipid biosynthesis</keyword>
<keyword id="KW-1208">Phospholipid metabolism</keyword>
<keyword id="KW-0597">Phosphoprotein</keyword>
<keyword id="KW-1185">Reference proteome</keyword>
<keyword id="KW-0808">Transferase</keyword>
<keyword id="KW-0812">Transmembrane</keyword>
<keyword id="KW-1133">Transmembrane helix</keyword>
<name>PTSS2_MOUSE</name>
<comment type="function">
    <text evidence="5 6 7 9">Catalyzes a base-exchange reaction in which the polar head group of phosphatidylethanolamine (PE) or phosphatidylcholine (PC) is replaced by L-serine (PubMed:10432300, PubMed:10938271, PubMed:12361952, PubMed:23071296). Catalyzes the conversion of phosphatatidylethanolamine and does not act on phosphatidylcholine (PubMed:10938271, PubMed:23071296). Can utilize both phosphatidylethanolamine (PE) plasmalogen and diacyl PE as substrate and the latter is six times better utilized, indicating the importance of an ester linkage at the sn-1 position (PubMed:23071296). Although it shows no sn-1 fatty acyl preference, exhibits significant preference towards docosahexaenoic acid (22:6n-3) compared with 18:1 or 20:4 at the sn-2 position (PubMed:23071296).</text>
</comment>
<comment type="catalytic activity">
    <reaction evidence="5 6 7 9">
        <text>a 1,2-diacyl-sn-glycero-3-phosphoethanolamine + L-serine = a 1,2-diacyl-sn-glycero-3-phospho-L-serine + ethanolamine</text>
        <dbReference type="Rhea" id="RHEA:27606"/>
        <dbReference type="ChEBI" id="CHEBI:33384"/>
        <dbReference type="ChEBI" id="CHEBI:57262"/>
        <dbReference type="ChEBI" id="CHEBI:57603"/>
        <dbReference type="ChEBI" id="CHEBI:64612"/>
        <dbReference type="EC" id="2.7.8.29"/>
    </reaction>
    <physiologicalReaction direction="left-to-right" evidence="12">
        <dbReference type="Rhea" id="RHEA:27607"/>
    </physiologicalReaction>
</comment>
<comment type="catalytic activity">
    <reaction evidence="9">
        <text>1-hexadecanoyl-2-(9Z-octadecenoyl)-sn-glycero-3-phosphoethanolamine + L-serine = 1-hexadecanoyl-2-(9Z-octadecenoyl)-sn-glycero-3-phospho-L-serine + ethanolamine</text>
        <dbReference type="Rhea" id="RHEA:41484"/>
        <dbReference type="ChEBI" id="CHEBI:33384"/>
        <dbReference type="ChEBI" id="CHEBI:57603"/>
        <dbReference type="ChEBI" id="CHEBI:73007"/>
        <dbReference type="ChEBI" id="CHEBI:75029"/>
    </reaction>
    <physiologicalReaction direction="left-to-right" evidence="12">
        <dbReference type="Rhea" id="RHEA:41485"/>
    </physiologicalReaction>
</comment>
<comment type="catalytic activity">
    <reaction evidence="9">
        <text>1-hexadecanoyl-2-(4Z,7Z,10Z,13Z,16Z,19Z-docosahexaenoyl)-sn-glycero-3-phosphoethanolamine + L-serine = 1-hexadecanoyl-2-(4Z,7Z,10Z,13Z,16Z,19Z-docosahexaenoyl)-sn-glycero-3-phosphoserine + ethanolamine</text>
        <dbReference type="Rhea" id="RHEA:41488"/>
        <dbReference type="ChEBI" id="CHEBI:33384"/>
        <dbReference type="ChEBI" id="CHEBI:57603"/>
        <dbReference type="ChEBI" id="CHEBI:78261"/>
        <dbReference type="ChEBI" id="CHEBI:78262"/>
    </reaction>
    <physiologicalReaction direction="left-to-right" evidence="12">
        <dbReference type="Rhea" id="RHEA:41489"/>
    </physiologicalReaction>
</comment>
<comment type="catalytic activity">
    <reaction evidence="9">
        <text>1-octadecanoyl-2-(5Z,8Z,11Z,14Z)-eicosatetraenoyl-sn-glycero-3-phosphoethanolamine + L-serine = 1-octadecanoyl-2-(5Z,8Z,11Z,14Z)-eicosatetraenoyl-sn-glycero-3-phosphoserine + ethanolamine</text>
        <dbReference type="Rhea" id="RHEA:41500"/>
        <dbReference type="ChEBI" id="CHEBI:33384"/>
        <dbReference type="ChEBI" id="CHEBI:57603"/>
        <dbReference type="ChEBI" id="CHEBI:78268"/>
        <dbReference type="ChEBI" id="CHEBI:78269"/>
    </reaction>
    <physiologicalReaction direction="left-to-right" evidence="12">
        <dbReference type="Rhea" id="RHEA:41501"/>
    </physiologicalReaction>
</comment>
<comment type="catalytic activity">
    <reaction evidence="9">
        <text>1-octadecanoyl-2-(4Z,7Z,10Z,13Z,16Z,19Z-docosahexaenoyl)-sn-glycero-3-phosphoethanolamine + L-serine = 1-octadecanoyl-2-(4Z,7Z,10Z,13Z,16Z,19Z-docosahexaenoyl)-sn-glycero-3-phosphoserine + ethanolamine</text>
        <dbReference type="Rhea" id="RHEA:41492"/>
        <dbReference type="ChEBI" id="CHEBI:33384"/>
        <dbReference type="ChEBI" id="CHEBI:57603"/>
        <dbReference type="ChEBI" id="CHEBI:78265"/>
        <dbReference type="ChEBI" id="CHEBI:78266"/>
    </reaction>
    <physiologicalReaction direction="left-to-right" evidence="12">
        <dbReference type="Rhea" id="RHEA:41493"/>
    </physiologicalReaction>
</comment>
<comment type="catalytic activity">
    <reaction evidence="9">
        <text>1-(1Z-octadecenyl)-2-(4Z,7Z,10Z,13Z,16Z,19Z-docosahexaenoyl)-sn-glycero-3-phosphoethanolamine + L-serine = 1-(1Z-octadecenyl)-2-(4Z,7Z,10Z,13Z,16Z,19Z-docosahexaenoyl)-sn-glycero-3-phospho-L-serine + ethanolamine</text>
        <dbReference type="Rhea" id="RHEA:41496"/>
        <dbReference type="ChEBI" id="CHEBI:33384"/>
        <dbReference type="ChEBI" id="CHEBI:57603"/>
        <dbReference type="ChEBI" id="CHEBI:78263"/>
        <dbReference type="ChEBI" id="CHEBI:78264"/>
    </reaction>
    <physiologicalReaction direction="left-to-right" evidence="12">
        <dbReference type="Rhea" id="RHEA:41497"/>
    </physiologicalReaction>
</comment>
<comment type="catalytic activity">
    <reaction evidence="9">
        <text>1-octadecanoyl-2-(9Z-octadecenoyl)-sn-glycero-3-phosphoethanolamine + L-serine = 1-octadecanoyl-2-(9Z-octadecenoyl)-sn-glycero-3-phospho-L-serine + ethanolamine</text>
        <dbReference type="Rhea" id="RHEA:40795"/>
        <dbReference type="ChEBI" id="CHEBI:33384"/>
        <dbReference type="ChEBI" id="CHEBI:57603"/>
        <dbReference type="ChEBI" id="CHEBI:75038"/>
        <dbReference type="ChEBI" id="CHEBI:78260"/>
    </reaction>
    <physiologicalReaction direction="left-to-right" evidence="12">
        <dbReference type="Rhea" id="RHEA:40796"/>
    </physiologicalReaction>
</comment>
<comment type="catalytic activity">
    <reaction evidence="9">
        <text>1-(1Z-octadecenyl)-2-(9Z-octadecenoyl)-sn-glycero-3-phosphoethanolamine + L-serine = 1-(1Z-octadecenyl)-2-(9Z-octadecenoyl)-sn-glycero-3-phospho-L-serine + ethanolamine</text>
        <dbReference type="Rhea" id="RHEA:41600"/>
        <dbReference type="ChEBI" id="CHEBI:33384"/>
        <dbReference type="ChEBI" id="CHEBI:57603"/>
        <dbReference type="ChEBI" id="CHEBI:78340"/>
        <dbReference type="ChEBI" id="CHEBI:78341"/>
    </reaction>
    <physiologicalReaction direction="left-to-right" evidence="12">
        <dbReference type="Rhea" id="RHEA:41601"/>
    </physiologicalReaction>
</comment>
<comment type="catalytic activity">
    <reaction evidence="9">
        <text>1-(1Z-octadecenyl)-2-(5Z,8Z,11Z,14Z- eicosatetraenoyl)-sn-glycero-3-phosphoethanolamine + L-serine = 1-(1Z-octadecenyl)-2-(5Z,8Z,11Z,14Z-eicosatetraenoyl)-sn-glycero-3-phospho-L-serine + ethanolamine</text>
        <dbReference type="Rhea" id="RHEA:41604"/>
        <dbReference type="ChEBI" id="CHEBI:33384"/>
        <dbReference type="ChEBI" id="CHEBI:57603"/>
        <dbReference type="ChEBI" id="CHEBI:78342"/>
        <dbReference type="ChEBI" id="CHEBI:78343"/>
    </reaction>
    <physiologicalReaction direction="left-to-right" evidence="12">
        <dbReference type="Rhea" id="RHEA:41605"/>
    </physiologicalReaction>
</comment>
<comment type="activity regulation">
    <text evidence="6">Almost complete inhibition by ethanolamine in both the mitochondria-associated membrane (MAM) and endoplasmic reticulum (ER) per se.</text>
</comment>
<comment type="pathway">
    <text>Phospholipid metabolism; phosphatidylserine biosynthesis.</text>
</comment>
<comment type="subcellular location">
    <subcellularLocation>
        <location evidence="6">Endoplasmic reticulum membrane</location>
        <topology evidence="6">Multi-pass membrane protein</topology>
    </subcellularLocation>
    <subcellularLocation>
        <location evidence="9">Membrane</location>
    </subcellularLocation>
    <text>Highly enriched in the mitochondria-associated membrane (MAM).</text>
</comment>
<comment type="alternative products">
    <event type="alternative splicing"/>
    <isoform>
        <id>Q9Z1X2-1</id>
        <name>1</name>
        <sequence type="displayed"/>
    </isoform>
    <isoform>
        <id>Q9Z1X2-2</id>
        <name>2</name>
        <sequence type="described" ref="VSP_010637 VSP_010638"/>
    </isoform>
</comment>
<comment type="tissue specificity">
    <text evidence="5 7">Highly expressed in testis. Detected at lower levels in kidney and heart.</text>
</comment>
<comment type="disruption phenotype">
    <text evidence="7 8">Null mice exhibit a reduction of more than 95% in serine exchange in testis and approximately 90% reduction in brain and liver. Testis weight is reduced and some animals are infertile. Elimination of either Pss1 or Pss2, but not both, is compatible with mouse viability. Mice can tolerate as little as 10% serine-exchange activity and are viable with small amounts of phosphatidylserine and phosphatidylethanolamine content.</text>
</comment>
<comment type="similarity">
    <text evidence="11">Belongs to the phosphatidyl serine synthase family.</text>
</comment>
<organism>
    <name type="scientific">Mus musculus</name>
    <name type="common">Mouse</name>
    <dbReference type="NCBI Taxonomy" id="10090"/>
    <lineage>
        <taxon>Eukaryota</taxon>
        <taxon>Metazoa</taxon>
        <taxon>Chordata</taxon>
        <taxon>Craniata</taxon>
        <taxon>Vertebrata</taxon>
        <taxon>Euteleostomi</taxon>
        <taxon>Mammalia</taxon>
        <taxon>Eutheria</taxon>
        <taxon>Euarchontoglires</taxon>
        <taxon>Glires</taxon>
        <taxon>Rodentia</taxon>
        <taxon>Myomorpha</taxon>
        <taxon>Muroidea</taxon>
        <taxon>Muridae</taxon>
        <taxon>Murinae</taxon>
        <taxon>Mus</taxon>
        <taxon>Mus</taxon>
    </lineage>
</organism>
<evidence type="ECO:0000250" key="1"/>
<evidence type="ECO:0000250" key="2">
    <source>
        <dbReference type="UniProtKB" id="B2GV22"/>
    </source>
</evidence>
<evidence type="ECO:0000255" key="3"/>
<evidence type="ECO:0000256" key="4">
    <source>
        <dbReference type="SAM" id="MobiDB-lite"/>
    </source>
</evidence>
<evidence type="ECO:0000269" key="5">
    <source>
    </source>
</evidence>
<evidence type="ECO:0000269" key="6">
    <source>
    </source>
</evidence>
<evidence type="ECO:0000269" key="7">
    <source>
    </source>
</evidence>
<evidence type="ECO:0000269" key="8">
    <source>
    </source>
</evidence>
<evidence type="ECO:0000269" key="9">
    <source>
    </source>
</evidence>
<evidence type="ECO:0000303" key="10">
    <source>
    </source>
</evidence>
<evidence type="ECO:0000305" key="11"/>
<evidence type="ECO:0000305" key="12">
    <source>
    </source>
</evidence>
<evidence type="ECO:0007744" key="13">
    <source>
    </source>
</evidence>
<protein>
    <recommendedName>
        <fullName>Phosphatidylserine synthase 2</fullName>
        <shortName>PSS-2</shortName>
        <shortName>PtdSer synthase 2</shortName>
        <ecNumber evidence="5 6 7 9">2.7.8.29</ecNumber>
    </recommendedName>
    <alternativeName>
        <fullName>Serine-exchange enzyme II</fullName>
    </alternativeName>
</protein>
<proteinExistence type="evidence at protein level"/>
<sequence>MRRGERRVAGGSGSESPLLKGRRSTESEVYDDGTNTFFWRAHTLTVLFILTCALGYVTLLEETPQDTAYNTKRGIVASILVFLCFGVTQAKDGPFSRPHPAYWRFWLCVSVVYELFLIFILFQTVQDGRQFLKYVDPRLGVPLPERDYGGNCLIYDADNKTDPFHNIWDKLDGFVPAHFIGWYLKTLMIRDWWMCMIISVMFEFLEYSLEHQLPNFSECWWDHWIMDVLVCNGLGIYCGMKTLEWLSLKTYKWQGLWNIPTYKGKMKRIAFQFTPYSWVRFEWKPASSLHRWLAVCGIILVFLLAELNTFYLKFVLWMPPEHYLVLLRLVFFVNVGGVAMREIYDFMDELKPHRKLGQQAWLVAAITVTELLIVVKYDPHTLTLSLPFYISQCWTLGSILVLTWTVWRFFLRDITMRYKETRRQKQQSHQARAVNNRDGHPGPDDDLLGTGTAEEEGTTNDGVTAEEGTSAAS</sequence>
<dbReference type="EC" id="2.7.8.29" evidence="5 6 7 9"/>
<dbReference type="EMBL" id="AF099053">
    <property type="protein sequence ID" value="AAC98383.1"/>
    <property type="molecule type" value="mRNA"/>
</dbReference>
<dbReference type="EMBL" id="AK021249">
    <property type="protein sequence ID" value="BAB32347.1"/>
    <property type="molecule type" value="mRNA"/>
</dbReference>
<dbReference type="EMBL" id="AK031906">
    <property type="protein sequence ID" value="BAC27599.1"/>
    <property type="molecule type" value="mRNA"/>
</dbReference>
<dbReference type="EMBL" id="AK032686">
    <property type="protein sequence ID" value="BAC27987.1"/>
    <property type="molecule type" value="mRNA"/>
</dbReference>
<dbReference type="EMBL" id="AK036368">
    <property type="protein sequence ID" value="BAC29399.1"/>
    <property type="molecule type" value="mRNA"/>
</dbReference>
<dbReference type="EMBL" id="AK081275">
    <property type="protein sequence ID" value="BAC38180.1"/>
    <property type="molecule type" value="mRNA"/>
</dbReference>
<dbReference type="EMBL" id="BC009013">
    <property type="protein sequence ID" value="AAH09013.1"/>
    <property type="molecule type" value="mRNA"/>
</dbReference>
<dbReference type="EMBL" id="BC053517">
    <property type="protein sequence ID" value="AAH53517.1"/>
    <property type="molecule type" value="mRNA"/>
</dbReference>
<dbReference type="CCDS" id="CCDS22001.1">
    <molecule id="Q9Z1X2-1"/>
</dbReference>
<dbReference type="RefSeq" id="NP_038810.2">
    <molecule id="Q9Z1X2-1"/>
    <property type="nucleotide sequence ID" value="NM_013782.4"/>
</dbReference>
<dbReference type="SMR" id="Q9Z1X2"/>
<dbReference type="BioGRID" id="205195">
    <property type="interactions" value="1"/>
</dbReference>
<dbReference type="FunCoup" id="Q9Z1X2">
    <property type="interactions" value="1145"/>
</dbReference>
<dbReference type="STRING" id="10090.ENSMUSP00000026568"/>
<dbReference type="SwissLipids" id="SLP:000000710"/>
<dbReference type="GlyCosmos" id="Q9Z1X2">
    <property type="glycosylation" value="1 site, No reported glycans"/>
</dbReference>
<dbReference type="GlyGen" id="Q9Z1X2">
    <property type="glycosylation" value="1 site, 1 N-linked glycan (1 site)"/>
</dbReference>
<dbReference type="iPTMnet" id="Q9Z1X2"/>
<dbReference type="PhosphoSitePlus" id="Q9Z1X2"/>
<dbReference type="SwissPalm" id="Q9Z1X2"/>
<dbReference type="jPOST" id="Q9Z1X2"/>
<dbReference type="PaxDb" id="10090-ENSMUSP00000026568"/>
<dbReference type="PeptideAtlas" id="Q9Z1X2"/>
<dbReference type="ProteomicsDB" id="301920">
    <molecule id="Q9Z1X2-1"/>
</dbReference>
<dbReference type="ProteomicsDB" id="301921">
    <molecule id="Q9Z1X2-2"/>
</dbReference>
<dbReference type="Pumba" id="Q9Z1X2"/>
<dbReference type="Antibodypedia" id="41975">
    <property type="antibodies" value="98 antibodies from 15 providers"/>
</dbReference>
<dbReference type="DNASU" id="27388"/>
<dbReference type="Ensembl" id="ENSMUST00000026568.10">
    <molecule id="Q9Z1X2-1"/>
    <property type="protein sequence ID" value="ENSMUSP00000026568.9"/>
    <property type="gene ID" value="ENSMUSG00000025495.16"/>
</dbReference>
<dbReference type="GeneID" id="27388"/>
<dbReference type="KEGG" id="mmu:27388"/>
<dbReference type="UCSC" id="uc009kjp.1">
    <molecule id="Q9Z1X2-2"/>
    <property type="organism name" value="mouse"/>
</dbReference>
<dbReference type="UCSC" id="uc009kjq.1">
    <molecule id="Q9Z1X2-1"/>
    <property type="organism name" value="mouse"/>
</dbReference>
<dbReference type="AGR" id="MGI:1351664"/>
<dbReference type="CTD" id="81490"/>
<dbReference type="MGI" id="MGI:1351664">
    <property type="gene designation" value="Ptdss2"/>
</dbReference>
<dbReference type="VEuPathDB" id="HostDB:ENSMUSG00000025495"/>
<dbReference type="eggNOG" id="KOG2735">
    <property type="taxonomic scope" value="Eukaryota"/>
</dbReference>
<dbReference type="GeneTree" id="ENSGT00530000063576"/>
<dbReference type="HOGENOM" id="CLU_037661_4_1_1"/>
<dbReference type="InParanoid" id="Q9Z1X2"/>
<dbReference type="OMA" id="QHVLPNF"/>
<dbReference type="OrthoDB" id="10265393at2759"/>
<dbReference type="PhylomeDB" id="Q9Z1X2"/>
<dbReference type="TreeFam" id="TF300012"/>
<dbReference type="BRENDA" id="2.7.8.29">
    <property type="organism ID" value="3474"/>
</dbReference>
<dbReference type="Reactome" id="R-MMU-1483101">
    <property type="pathway name" value="Synthesis of PS"/>
</dbReference>
<dbReference type="UniPathway" id="UPA00948"/>
<dbReference type="BioGRID-ORCS" id="27388">
    <property type="hits" value="2 hits in 79 CRISPR screens"/>
</dbReference>
<dbReference type="ChiTaRS" id="Ptdss2">
    <property type="organism name" value="mouse"/>
</dbReference>
<dbReference type="PRO" id="PR:Q9Z1X2"/>
<dbReference type="Proteomes" id="UP000000589">
    <property type="component" value="Chromosome 7"/>
</dbReference>
<dbReference type="RNAct" id="Q9Z1X2">
    <property type="molecule type" value="protein"/>
</dbReference>
<dbReference type="Bgee" id="ENSMUSG00000025495">
    <property type="expression patterns" value="Expressed in fetal liver hematopoietic progenitor cell and 269 other cell types or tissues"/>
</dbReference>
<dbReference type="ExpressionAtlas" id="Q9Z1X2">
    <property type="expression patterns" value="baseline and differential"/>
</dbReference>
<dbReference type="GO" id="GO:0005789">
    <property type="term" value="C:endoplasmic reticulum membrane"/>
    <property type="evidence" value="ECO:0000314"/>
    <property type="project" value="UniProtKB"/>
</dbReference>
<dbReference type="GO" id="GO:0016020">
    <property type="term" value="C:membrane"/>
    <property type="evidence" value="ECO:0000314"/>
    <property type="project" value="UniProtKB"/>
</dbReference>
<dbReference type="GO" id="GO:0003882">
    <property type="term" value="F:CDP-diacylglycerol-serine O-phosphatidyltransferase activity"/>
    <property type="evidence" value="ECO:0000315"/>
    <property type="project" value="MGI"/>
</dbReference>
<dbReference type="GO" id="GO:0106245">
    <property type="term" value="F:L-serine-phosphatidylethanolamine phosphatidyltransferase activity"/>
    <property type="evidence" value="ECO:0000314"/>
    <property type="project" value="UniProtKB"/>
</dbReference>
<dbReference type="GO" id="GO:0006659">
    <property type="term" value="P:phosphatidylserine biosynthetic process"/>
    <property type="evidence" value="ECO:0000315"/>
    <property type="project" value="MGI"/>
</dbReference>
<dbReference type="InterPro" id="IPR004277">
    <property type="entry name" value="PSS"/>
</dbReference>
<dbReference type="PANTHER" id="PTHR15362">
    <property type="entry name" value="PHOSPHATIDYLINOSITOL SYNTHASE"/>
    <property type="match status" value="1"/>
</dbReference>
<dbReference type="PANTHER" id="PTHR15362:SF7">
    <property type="entry name" value="PHOSPHATIDYLSERINE SYNTHASE 2"/>
    <property type="match status" value="1"/>
</dbReference>
<dbReference type="Pfam" id="PF03034">
    <property type="entry name" value="PSS"/>
    <property type="match status" value="1"/>
</dbReference>
<gene>
    <name type="primary">Ptdss2</name>
    <name type="synonym">Pss2</name>
</gene>
<accession>Q9Z1X2</accession>
<accession>Q8BHL2</accession>
<accession>Q8CCI8</accession>
<accession>Q8CCY7</accession>
<accession>Q922A1</accession>
<accession>Q9CY68</accession>